<comment type="function">
    <text evidence="1">One of several proteins that assist in the late maturation steps of the functional core of the 30S ribosomal subunit. Associates with free 30S ribosomal subunits (but not with 30S subunits that are part of 70S ribosomes or polysomes). Required for efficient processing of 16S rRNA. May interact with the 5'-terminal helix region of 16S rRNA.</text>
</comment>
<comment type="subunit">
    <text evidence="1">Monomer. Binds 30S ribosomal subunits, but not 50S ribosomal subunits or 70S ribosomes.</text>
</comment>
<comment type="subcellular location">
    <subcellularLocation>
        <location evidence="1">Cytoplasm</location>
    </subcellularLocation>
</comment>
<comment type="similarity">
    <text evidence="1">Belongs to the RbfA family.</text>
</comment>
<accession>A1KMI1</accession>
<protein>
    <recommendedName>
        <fullName evidence="1">Ribosome-binding factor A</fullName>
    </recommendedName>
</protein>
<feature type="chain" id="PRO_1000000142" description="Ribosome-binding factor A">
    <location>
        <begin position="1"/>
        <end position="183"/>
    </location>
</feature>
<feature type="region of interest" description="Disordered" evidence="2">
    <location>
        <begin position="132"/>
        <end position="183"/>
    </location>
</feature>
<gene>
    <name evidence="1" type="primary">rbfA</name>
    <name type="ordered locus">BCG_2858c</name>
</gene>
<proteinExistence type="inferred from homology"/>
<dbReference type="EMBL" id="AM408590">
    <property type="protein sequence ID" value="CAL72847.1"/>
    <property type="molecule type" value="Genomic_DNA"/>
</dbReference>
<dbReference type="RefSeq" id="WP_003414508.1">
    <property type="nucleotide sequence ID" value="NC_008769.1"/>
</dbReference>
<dbReference type="SMR" id="A1KMI1"/>
<dbReference type="KEGG" id="mbb:BCG_2858c"/>
<dbReference type="HOGENOM" id="CLU_089475_0_0_11"/>
<dbReference type="Proteomes" id="UP000001472">
    <property type="component" value="Chromosome"/>
</dbReference>
<dbReference type="GO" id="GO:0005829">
    <property type="term" value="C:cytosol"/>
    <property type="evidence" value="ECO:0007669"/>
    <property type="project" value="TreeGrafter"/>
</dbReference>
<dbReference type="GO" id="GO:0043024">
    <property type="term" value="F:ribosomal small subunit binding"/>
    <property type="evidence" value="ECO:0007669"/>
    <property type="project" value="TreeGrafter"/>
</dbReference>
<dbReference type="GO" id="GO:0030490">
    <property type="term" value="P:maturation of SSU-rRNA"/>
    <property type="evidence" value="ECO:0007669"/>
    <property type="project" value="UniProtKB-UniRule"/>
</dbReference>
<dbReference type="FunFam" id="3.30.300.20:FF:000018">
    <property type="entry name" value="Ribosome-binding factor A"/>
    <property type="match status" value="1"/>
</dbReference>
<dbReference type="Gene3D" id="3.30.300.20">
    <property type="match status" value="1"/>
</dbReference>
<dbReference type="HAMAP" id="MF_00003">
    <property type="entry name" value="RbfA"/>
    <property type="match status" value="1"/>
</dbReference>
<dbReference type="InterPro" id="IPR015946">
    <property type="entry name" value="KH_dom-like_a/b"/>
</dbReference>
<dbReference type="InterPro" id="IPR000238">
    <property type="entry name" value="RbfA"/>
</dbReference>
<dbReference type="InterPro" id="IPR023799">
    <property type="entry name" value="RbfA_dom_sf"/>
</dbReference>
<dbReference type="InterPro" id="IPR020053">
    <property type="entry name" value="Ribosome-bd_factorA_CS"/>
</dbReference>
<dbReference type="NCBIfam" id="TIGR00082">
    <property type="entry name" value="rbfA"/>
    <property type="match status" value="1"/>
</dbReference>
<dbReference type="PANTHER" id="PTHR33515">
    <property type="entry name" value="RIBOSOME-BINDING FACTOR A, CHLOROPLASTIC-RELATED"/>
    <property type="match status" value="1"/>
</dbReference>
<dbReference type="PANTHER" id="PTHR33515:SF1">
    <property type="entry name" value="RIBOSOME-BINDING FACTOR A, CHLOROPLASTIC-RELATED"/>
    <property type="match status" value="1"/>
</dbReference>
<dbReference type="Pfam" id="PF02033">
    <property type="entry name" value="RBFA"/>
    <property type="match status" value="1"/>
</dbReference>
<dbReference type="SUPFAM" id="SSF89919">
    <property type="entry name" value="Ribosome-binding factor A, RbfA"/>
    <property type="match status" value="1"/>
</dbReference>
<dbReference type="PROSITE" id="PS01319">
    <property type="entry name" value="RBFA"/>
    <property type="match status" value="1"/>
</dbReference>
<sequence length="183" mass="18998">MADAARARRLAKRIAAIVASAIEYEIKDPGLAGVTITDAKVTADLHDATVYYTVMGRTLHDEPNCAGAAAALERAKGVLRTKVGAGTGVRFTPTLTFTLDTISDSVHRMDELLARARAADADLARVRVGAKPAGEADPYRDNGSVAQSPAPGGLGIRTSDGPEAVEAPLTCGGDTGDDDRPKE</sequence>
<organism>
    <name type="scientific">Mycobacterium bovis (strain BCG / Pasteur 1173P2)</name>
    <dbReference type="NCBI Taxonomy" id="410289"/>
    <lineage>
        <taxon>Bacteria</taxon>
        <taxon>Bacillati</taxon>
        <taxon>Actinomycetota</taxon>
        <taxon>Actinomycetes</taxon>
        <taxon>Mycobacteriales</taxon>
        <taxon>Mycobacteriaceae</taxon>
        <taxon>Mycobacterium</taxon>
        <taxon>Mycobacterium tuberculosis complex</taxon>
    </lineage>
</organism>
<name>RBFA_MYCBP</name>
<keyword id="KW-0963">Cytoplasm</keyword>
<keyword id="KW-0690">Ribosome biogenesis</keyword>
<evidence type="ECO:0000255" key="1">
    <source>
        <dbReference type="HAMAP-Rule" id="MF_00003"/>
    </source>
</evidence>
<evidence type="ECO:0000256" key="2">
    <source>
        <dbReference type="SAM" id="MobiDB-lite"/>
    </source>
</evidence>
<reference key="1">
    <citation type="journal article" date="2007" name="Proc. Natl. Acad. Sci. U.S.A.">
        <title>Genome plasticity of BCG and impact on vaccine efficacy.</title>
        <authorList>
            <person name="Brosch R."/>
            <person name="Gordon S.V."/>
            <person name="Garnier T."/>
            <person name="Eiglmeier K."/>
            <person name="Frigui W."/>
            <person name="Valenti P."/>
            <person name="Dos Santos S."/>
            <person name="Duthoy S."/>
            <person name="Lacroix C."/>
            <person name="Garcia-Pelayo C."/>
            <person name="Inwald J.K."/>
            <person name="Golby P."/>
            <person name="Garcia J.N."/>
            <person name="Hewinson R.G."/>
            <person name="Behr M.A."/>
            <person name="Quail M.A."/>
            <person name="Churcher C."/>
            <person name="Barrell B.G."/>
            <person name="Parkhill J."/>
            <person name="Cole S.T."/>
        </authorList>
    </citation>
    <scope>NUCLEOTIDE SEQUENCE [LARGE SCALE GENOMIC DNA]</scope>
    <source>
        <strain>BCG / Pasteur 1173P2</strain>
    </source>
</reference>